<comment type="subunit">
    <text evidence="1">Part of the 50S ribosomal subunit.</text>
</comment>
<comment type="similarity">
    <text evidence="1">Belongs to the universal ribosomal protein uL30 family.</text>
</comment>
<sequence>MAKKLEITLTRSVIGRPQDQRATVEALGLKKLNSTVVKEETPAILGMINKVSHLLTVKEA</sequence>
<organism>
    <name type="scientific">Bacillus cereus (strain G9842)</name>
    <dbReference type="NCBI Taxonomy" id="405531"/>
    <lineage>
        <taxon>Bacteria</taxon>
        <taxon>Bacillati</taxon>
        <taxon>Bacillota</taxon>
        <taxon>Bacilli</taxon>
        <taxon>Bacillales</taxon>
        <taxon>Bacillaceae</taxon>
        <taxon>Bacillus</taxon>
        <taxon>Bacillus cereus group</taxon>
    </lineage>
</organism>
<proteinExistence type="inferred from homology"/>
<evidence type="ECO:0000255" key="1">
    <source>
        <dbReference type="HAMAP-Rule" id="MF_01371"/>
    </source>
</evidence>
<evidence type="ECO:0000305" key="2"/>
<feature type="chain" id="PRO_1000144648" description="Large ribosomal subunit protein uL30">
    <location>
        <begin position="1"/>
        <end position="60"/>
    </location>
</feature>
<dbReference type="EMBL" id="CP001186">
    <property type="protein sequence ID" value="ACK93389.1"/>
    <property type="molecule type" value="Genomic_DNA"/>
</dbReference>
<dbReference type="RefSeq" id="WP_001085233.1">
    <property type="nucleotide sequence ID" value="NC_011772.1"/>
</dbReference>
<dbReference type="SMR" id="B7IT37"/>
<dbReference type="GeneID" id="72446946"/>
<dbReference type="KEGG" id="bcg:BCG9842_B5177"/>
<dbReference type="HOGENOM" id="CLU_131047_2_1_9"/>
<dbReference type="Proteomes" id="UP000006744">
    <property type="component" value="Chromosome"/>
</dbReference>
<dbReference type="GO" id="GO:0022625">
    <property type="term" value="C:cytosolic large ribosomal subunit"/>
    <property type="evidence" value="ECO:0007669"/>
    <property type="project" value="TreeGrafter"/>
</dbReference>
<dbReference type="GO" id="GO:0003735">
    <property type="term" value="F:structural constituent of ribosome"/>
    <property type="evidence" value="ECO:0007669"/>
    <property type="project" value="InterPro"/>
</dbReference>
<dbReference type="GO" id="GO:0006412">
    <property type="term" value="P:translation"/>
    <property type="evidence" value="ECO:0007669"/>
    <property type="project" value="UniProtKB-UniRule"/>
</dbReference>
<dbReference type="CDD" id="cd01658">
    <property type="entry name" value="Ribosomal_L30"/>
    <property type="match status" value="1"/>
</dbReference>
<dbReference type="FunFam" id="3.30.1390.20:FF:000001">
    <property type="entry name" value="50S ribosomal protein L30"/>
    <property type="match status" value="1"/>
</dbReference>
<dbReference type="Gene3D" id="3.30.1390.20">
    <property type="entry name" value="Ribosomal protein L30, ferredoxin-like fold domain"/>
    <property type="match status" value="1"/>
</dbReference>
<dbReference type="HAMAP" id="MF_01371_B">
    <property type="entry name" value="Ribosomal_uL30_B"/>
    <property type="match status" value="1"/>
</dbReference>
<dbReference type="InterPro" id="IPR036919">
    <property type="entry name" value="Ribo_uL30_ferredoxin-like_sf"/>
</dbReference>
<dbReference type="InterPro" id="IPR005996">
    <property type="entry name" value="Ribosomal_uL30_bac-type"/>
</dbReference>
<dbReference type="InterPro" id="IPR016082">
    <property type="entry name" value="Ribosomal_uL30_ferredoxin-like"/>
</dbReference>
<dbReference type="NCBIfam" id="TIGR01308">
    <property type="entry name" value="rpmD_bact"/>
    <property type="match status" value="1"/>
</dbReference>
<dbReference type="PANTHER" id="PTHR15892:SF2">
    <property type="entry name" value="LARGE RIBOSOMAL SUBUNIT PROTEIN UL30M"/>
    <property type="match status" value="1"/>
</dbReference>
<dbReference type="PANTHER" id="PTHR15892">
    <property type="entry name" value="MITOCHONDRIAL RIBOSOMAL PROTEIN L30"/>
    <property type="match status" value="1"/>
</dbReference>
<dbReference type="Pfam" id="PF00327">
    <property type="entry name" value="Ribosomal_L30"/>
    <property type="match status" value="1"/>
</dbReference>
<dbReference type="PIRSF" id="PIRSF002211">
    <property type="entry name" value="Ribosomal_L30_bac-type"/>
    <property type="match status" value="1"/>
</dbReference>
<dbReference type="SUPFAM" id="SSF55129">
    <property type="entry name" value="Ribosomal protein L30p/L7e"/>
    <property type="match status" value="1"/>
</dbReference>
<reference key="1">
    <citation type="submission" date="2008-10" db="EMBL/GenBank/DDBJ databases">
        <title>Genome sequence of Bacillus cereus G9842.</title>
        <authorList>
            <person name="Dodson R.J."/>
            <person name="Durkin A.S."/>
            <person name="Rosovitz M.J."/>
            <person name="Rasko D.A."/>
            <person name="Hoffmaster A."/>
            <person name="Ravel J."/>
            <person name="Sutton G."/>
        </authorList>
    </citation>
    <scope>NUCLEOTIDE SEQUENCE [LARGE SCALE GENOMIC DNA]</scope>
    <source>
        <strain>G9842</strain>
    </source>
</reference>
<protein>
    <recommendedName>
        <fullName evidence="1">Large ribosomal subunit protein uL30</fullName>
    </recommendedName>
    <alternativeName>
        <fullName evidence="2">50S ribosomal protein L30</fullName>
    </alternativeName>
</protein>
<keyword id="KW-0687">Ribonucleoprotein</keyword>
<keyword id="KW-0689">Ribosomal protein</keyword>
<gene>
    <name evidence="1" type="primary">rpmD</name>
    <name type="ordered locus">BCG9842_B5177</name>
</gene>
<name>RL30_BACC2</name>
<accession>B7IT37</accession>